<reference key="1">
    <citation type="journal article" date="2003" name="Genome Res.">
        <title>Comparative genome analysis of Vibrio vulnificus, a marine pathogen.</title>
        <authorList>
            <person name="Chen C.-Y."/>
            <person name="Wu K.-M."/>
            <person name="Chang Y.-C."/>
            <person name="Chang C.-H."/>
            <person name="Tsai H.-C."/>
            <person name="Liao T.-L."/>
            <person name="Liu Y.-M."/>
            <person name="Chen H.-J."/>
            <person name="Shen A.B.-T."/>
            <person name="Li J.-C."/>
            <person name="Su T.-L."/>
            <person name="Shao C.-P."/>
            <person name="Lee C.-T."/>
            <person name="Hor L.-I."/>
            <person name="Tsai S.-F."/>
        </authorList>
    </citation>
    <scope>NUCLEOTIDE SEQUENCE [LARGE SCALE GENOMIC DNA]</scope>
    <source>
        <strain>YJ016</strain>
    </source>
</reference>
<accession>P67696</accession>
<accession>Q8DC29</accession>
<proteinExistence type="inferred from homology"/>
<keyword id="KW-0131">Cell cycle</keyword>
<keyword id="KW-0132">Cell division</keyword>
<keyword id="KW-0963">Cytoplasm</keyword>
<keyword id="KW-0717">Septation</keyword>
<name>ZAPD_VIBVY</name>
<evidence type="ECO:0000255" key="1">
    <source>
        <dbReference type="HAMAP-Rule" id="MF_01092"/>
    </source>
</evidence>
<comment type="function">
    <text evidence="1">Cell division factor that enhances FtsZ-ring assembly. Directly interacts with FtsZ and promotes bundling of FtsZ protofilaments, with a reduction in FtsZ GTPase activity.</text>
</comment>
<comment type="subunit">
    <text evidence="1">Interacts with FtsZ.</text>
</comment>
<comment type="subcellular location">
    <subcellularLocation>
        <location evidence="1">Cytoplasm</location>
    </subcellularLocation>
    <text evidence="1">Localizes to mid-cell in an FtsZ-dependent manner.</text>
</comment>
<comment type="similarity">
    <text evidence="1">Belongs to the ZapD family.</text>
</comment>
<organism>
    <name type="scientific">Vibrio vulnificus (strain YJ016)</name>
    <dbReference type="NCBI Taxonomy" id="196600"/>
    <lineage>
        <taxon>Bacteria</taxon>
        <taxon>Pseudomonadati</taxon>
        <taxon>Pseudomonadota</taxon>
        <taxon>Gammaproteobacteria</taxon>
        <taxon>Vibrionales</taxon>
        <taxon>Vibrionaceae</taxon>
        <taxon>Vibrio</taxon>
    </lineage>
</organism>
<protein>
    <recommendedName>
        <fullName evidence="1">Cell division protein ZapD</fullName>
    </recommendedName>
    <alternativeName>
        <fullName evidence="1">Z ring-associated protein D</fullName>
    </alternativeName>
</protein>
<dbReference type="EMBL" id="BA000037">
    <property type="protein sequence ID" value="BAC95547.1"/>
    <property type="molecule type" value="Genomic_DNA"/>
</dbReference>
<dbReference type="RefSeq" id="WP_011079546.1">
    <property type="nucleotide sequence ID" value="NC_005139.1"/>
</dbReference>
<dbReference type="SMR" id="P67696"/>
<dbReference type="STRING" id="672.VV93_v1c24940"/>
<dbReference type="KEGG" id="vvy:VV2783"/>
<dbReference type="eggNOG" id="COG4582">
    <property type="taxonomic scope" value="Bacteria"/>
</dbReference>
<dbReference type="HOGENOM" id="CLU_076303_0_0_6"/>
<dbReference type="Proteomes" id="UP000002675">
    <property type="component" value="Chromosome I"/>
</dbReference>
<dbReference type="GO" id="GO:0032153">
    <property type="term" value="C:cell division site"/>
    <property type="evidence" value="ECO:0007669"/>
    <property type="project" value="TreeGrafter"/>
</dbReference>
<dbReference type="GO" id="GO:0005737">
    <property type="term" value="C:cytoplasm"/>
    <property type="evidence" value="ECO:0007669"/>
    <property type="project" value="UniProtKB-SubCell"/>
</dbReference>
<dbReference type="GO" id="GO:0000917">
    <property type="term" value="P:division septum assembly"/>
    <property type="evidence" value="ECO:0007669"/>
    <property type="project" value="UniProtKB-KW"/>
</dbReference>
<dbReference type="GO" id="GO:0043093">
    <property type="term" value="P:FtsZ-dependent cytokinesis"/>
    <property type="evidence" value="ECO:0007669"/>
    <property type="project" value="UniProtKB-UniRule"/>
</dbReference>
<dbReference type="Gene3D" id="1.10.3900.10">
    <property type="entry name" value="YacF-like"/>
    <property type="match status" value="1"/>
</dbReference>
<dbReference type="Gene3D" id="2.60.440.10">
    <property type="entry name" value="YacF-like domains"/>
    <property type="match status" value="1"/>
</dbReference>
<dbReference type="HAMAP" id="MF_01092">
    <property type="entry name" value="ZapD"/>
    <property type="match status" value="1"/>
</dbReference>
<dbReference type="InterPro" id="IPR009777">
    <property type="entry name" value="ZapD"/>
</dbReference>
<dbReference type="InterPro" id="IPR027462">
    <property type="entry name" value="ZapD_C"/>
</dbReference>
<dbReference type="InterPro" id="IPR036268">
    <property type="entry name" value="ZapD_sf"/>
</dbReference>
<dbReference type="NCBIfam" id="NF003655">
    <property type="entry name" value="PRK05287.1-3"/>
    <property type="match status" value="1"/>
</dbReference>
<dbReference type="PANTHER" id="PTHR39455">
    <property type="entry name" value="CELL DIVISION PROTEIN ZAPD"/>
    <property type="match status" value="1"/>
</dbReference>
<dbReference type="PANTHER" id="PTHR39455:SF1">
    <property type="entry name" value="CELL DIVISION PROTEIN ZAPD"/>
    <property type="match status" value="1"/>
</dbReference>
<dbReference type="Pfam" id="PF07072">
    <property type="entry name" value="ZapD"/>
    <property type="match status" value="1"/>
</dbReference>
<dbReference type="SUPFAM" id="SSF160950">
    <property type="entry name" value="YacF-like"/>
    <property type="match status" value="1"/>
</dbReference>
<feature type="chain" id="PRO_0000211686" description="Cell division protein ZapD">
    <location>
        <begin position="1"/>
        <end position="246"/>
    </location>
</feature>
<gene>
    <name evidence="1" type="primary">zapD</name>
    <name type="ordered locus">VV2783</name>
</gene>
<sequence length="246" mass="28589">MTTHNFEHPLNEKTRIYLRVESLLRQAHTAASFSEPHQHQLFFRSIFDLIEIFEQIQLKSELAKDIEKQRLLYRSWLNVEGVDQATLRSLLDEADRTHAALMQAPRFGQSLKEDRFLSSIRQRFSLPGGSCCFDLPALHYWLNLPIERKIEDARQWLDSLKPLSDALNLWLKLAREAGHFRSQTALNGFFQSDAEEANILRLHIPMEYGVYPMISGHKNRFAIKFINFETGQACSQDVHFELAVCS</sequence>